<protein>
    <recommendedName>
        <fullName evidence="1">Potassium-transporting ATPase ATP-binding subunit</fullName>
        <ecNumber evidence="1">7.2.2.6</ecNumber>
    </recommendedName>
    <alternativeName>
        <fullName evidence="1">ATP phosphohydrolase [potassium-transporting] B chain</fullName>
    </alternativeName>
    <alternativeName>
        <fullName evidence="1">Potassium-binding and translocating subunit B</fullName>
    </alternativeName>
    <alternativeName>
        <fullName evidence="1">Potassium-translocating ATPase B chain</fullName>
    </alternativeName>
</protein>
<organism>
    <name type="scientific">Staphylococcus aureus (strain bovine RF122 / ET3-1)</name>
    <dbReference type="NCBI Taxonomy" id="273036"/>
    <lineage>
        <taxon>Bacteria</taxon>
        <taxon>Bacillati</taxon>
        <taxon>Bacillota</taxon>
        <taxon>Bacilli</taxon>
        <taxon>Bacillales</taxon>
        <taxon>Staphylococcaceae</taxon>
        <taxon>Staphylococcus</taxon>
    </lineage>
</organism>
<feature type="chain" id="PRO_1000022448" description="Potassium-transporting ATPase ATP-binding subunit">
    <location>
        <begin position="1"/>
        <end position="675"/>
    </location>
</feature>
<feature type="transmembrane region" description="Helical" evidence="1">
    <location>
        <begin position="34"/>
        <end position="54"/>
    </location>
</feature>
<feature type="transmembrane region" description="Helical" evidence="1">
    <location>
        <begin position="65"/>
        <end position="85"/>
    </location>
</feature>
<feature type="transmembrane region" description="Helical" evidence="1">
    <location>
        <begin position="216"/>
        <end position="236"/>
    </location>
</feature>
<feature type="transmembrane region" description="Helical" evidence="1">
    <location>
        <begin position="245"/>
        <end position="265"/>
    </location>
</feature>
<feature type="transmembrane region" description="Helical" evidence="1">
    <location>
        <begin position="569"/>
        <end position="591"/>
    </location>
</feature>
<feature type="transmembrane region" description="Helical" evidence="1">
    <location>
        <begin position="611"/>
        <end position="631"/>
    </location>
</feature>
<feature type="transmembrane region" description="Helical" evidence="1">
    <location>
        <begin position="644"/>
        <end position="664"/>
    </location>
</feature>
<feature type="active site" description="4-aspartylphosphate intermediate" evidence="1">
    <location>
        <position position="304"/>
    </location>
</feature>
<feature type="binding site" evidence="1">
    <location>
        <position position="341"/>
    </location>
    <ligand>
        <name>ATP</name>
        <dbReference type="ChEBI" id="CHEBI:30616"/>
    </ligand>
</feature>
<feature type="binding site" evidence="1">
    <location>
        <position position="345"/>
    </location>
    <ligand>
        <name>ATP</name>
        <dbReference type="ChEBI" id="CHEBI:30616"/>
    </ligand>
</feature>
<feature type="binding site" evidence="1">
    <location>
        <begin position="372"/>
        <end position="379"/>
    </location>
    <ligand>
        <name>ATP</name>
        <dbReference type="ChEBI" id="CHEBI:30616"/>
    </ligand>
</feature>
<feature type="binding site" evidence="1">
    <location>
        <position position="390"/>
    </location>
    <ligand>
        <name>ATP</name>
        <dbReference type="ChEBI" id="CHEBI:30616"/>
    </ligand>
</feature>
<feature type="binding site" evidence="1">
    <location>
        <position position="513"/>
    </location>
    <ligand>
        <name>Mg(2+)</name>
        <dbReference type="ChEBI" id="CHEBI:18420"/>
    </ligand>
</feature>
<feature type="binding site" evidence="1">
    <location>
        <position position="517"/>
    </location>
    <ligand>
        <name>Mg(2+)</name>
        <dbReference type="ChEBI" id="CHEBI:18420"/>
    </ligand>
</feature>
<gene>
    <name evidence="1" type="primary">kdpB</name>
    <name type="ordered locus">SAB1961c</name>
</gene>
<accession>Q2YUH7</accession>
<name>KDPB_STAAB</name>
<sequence>MHHVNKYFNQTMVIEALKMSFYKLNPKQLIKNPIMFVVEVGMILTLILICFPDIFGTSYLSRSYLITIFIILLITILFANFSEAFAEGRGKAQADSLRQAQSNLTARLIEENGAYRIVNATELKAGQNIRVENGETIPADGVVINGLATVDESAITGESAPVIKESGGDFDGVIGGTLVTSDWLEIRVESEAGTSFLDKMIALVEGAERNKTPNEIALFTLLTTLTIIFLVVIVTLYPIASYLHLILPIAMLIALTVCLIPTTIGGLLSAIGIAGMDRVTQFNVLAKSGRAVEVCGDVDVMILDKTGTITYGNRIASEFLPVNQQMWEKLIVAAYMSSIYDDTPEGKSIVRLAKQMYINELPKDIDGTYKPFTAETRMSGIITNEISVFKGAPNSMINLVKQQQGDIPLNIESICMDVSSKGGTPLIVIENNVMLGVIYLKDVIKDGLVERFAELRKMGIETVMCTGDNALTAATIAKEAGVDRFVAECKPEDKIKVIKDEQAKGHIVAMTGDGTNDAPALAQANIGLAMNSGTISAKEAANLIDLDSNPTKLIEVVKIGKQLLMTRGALTTFSLANDVAKYFAILPALMMSTIPEMTLLNIMHLSSPKSAIISALIFNALIIVALIPIAMKGVKVKGYSIDRIFINNMLIYGLGGLIVPFLGIKLIDMIVQFFV</sequence>
<reference key="1">
    <citation type="journal article" date="2007" name="PLoS ONE">
        <title>Molecular correlates of host specialization in Staphylococcus aureus.</title>
        <authorList>
            <person name="Herron-Olson L."/>
            <person name="Fitzgerald J.R."/>
            <person name="Musser J.M."/>
            <person name="Kapur V."/>
        </authorList>
    </citation>
    <scope>NUCLEOTIDE SEQUENCE [LARGE SCALE GENOMIC DNA]</scope>
    <source>
        <strain>bovine RF122 / ET3-1</strain>
    </source>
</reference>
<evidence type="ECO:0000255" key="1">
    <source>
        <dbReference type="HAMAP-Rule" id="MF_00285"/>
    </source>
</evidence>
<dbReference type="EC" id="7.2.2.6" evidence="1"/>
<dbReference type="EMBL" id="AJ938182">
    <property type="protein sequence ID" value="CAI81650.1"/>
    <property type="molecule type" value="Genomic_DNA"/>
</dbReference>
<dbReference type="RefSeq" id="WP_000546607.1">
    <property type="nucleotide sequence ID" value="NC_007622.1"/>
</dbReference>
<dbReference type="SMR" id="Q2YUH7"/>
<dbReference type="KEGG" id="sab:SAB1961c"/>
<dbReference type="HOGENOM" id="CLU_025728_2_0_9"/>
<dbReference type="GO" id="GO:0005886">
    <property type="term" value="C:plasma membrane"/>
    <property type="evidence" value="ECO:0007669"/>
    <property type="project" value="UniProtKB-SubCell"/>
</dbReference>
<dbReference type="GO" id="GO:0005524">
    <property type="term" value="F:ATP binding"/>
    <property type="evidence" value="ECO:0007669"/>
    <property type="project" value="UniProtKB-UniRule"/>
</dbReference>
<dbReference type="GO" id="GO:0016887">
    <property type="term" value="F:ATP hydrolysis activity"/>
    <property type="evidence" value="ECO:0007669"/>
    <property type="project" value="InterPro"/>
</dbReference>
<dbReference type="GO" id="GO:0000287">
    <property type="term" value="F:magnesium ion binding"/>
    <property type="evidence" value="ECO:0007669"/>
    <property type="project" value="UniProtKB-UniRule"/>
</dbReference>
<dbReference type="GO" id="GO:0008556">
    <property type="term" value="F:P-type potassium transmembrane transporter activity"/>
    <property type="evidence" value="ECO:0007669"/>
    <property type="project" value="UniProtKB-UniRule"/>
</dbReference>
<dbReference type="FunFam" id="2.70.150.10:FF:000010">
    <property type="entry name" value="Potassium-transporting ATPase ATP-binding subunit"/>
    <property type="match status" value="1"/>
</dbReference>
<dbReference type="FunFam" id="3.40.1110.10:FF:000007">
    <property type="entry name" value="Potassium-transporting ATPase ATP-binding subunit"/>
    <property type="match status" value="1"/>
</dbReference>
<dbReference type="Gene3D" id="3.40.1110.10">
    <property type="entry name" value="Calcium-transporting ATPase, cytoplasmic domain N"/>
    <property type="match status" value="1"/>
</dbReference>
<dbReference type="Gene3D" id="2.70.150.10">
    <property type="entry name" value="Calcium-transporting ATPase, cytoplasmic transduction domain A"/>
    <property type="match status" value="1"/>
</dbReference>
<dbReference type="Gene3D" id="3.40.50.1000">
    <property type="entry name" value="HAD superfamily/HAD-like"/>
    <property type="match status" value="1"/>
</dbReference>
<dbReference type="HAMAP" id="MF_00285">
    <property type="entry name" value="KdpB"/>
    <property type="match status" value="1"/>
</dbReference>
<dbReference type="InterPro" id="IPR023299">
    <property type="entry name" value="ATPase_P-typ_cyto_dom_N"/>
</dbReference>
<dbReference type="InterPro" id="IPR018303">
    <property type="entry name" value="ATPase_P-typ_P_site"/>
</dbReference>
<dbReference type="InterPro" id="IPR023298">
    <property type="entry name" value="ATPase_P-typ_TM_dom_sf"/>
</dbReference>
<dbReference type="InterPro" id="IPR008250">
    <property type="entry name" value="ATPase_P-typ_transduc_dom_A_sf"/>
</dbReference>
<dbReference type="InterPro" id="IPR036412">
    <property type="entry name" value="HAD-like_sf"/>
</dbReference>
<dbReference type="InterPro" id="IPR023214">
    <property type="entry name" value="HAD_sf"/>
</dbReference>
<dbReference type="InterPro" id="IPR006391">
    <property type="entry name" value="P-type_ATPase_bsu_IA"/>
</dbReference>
<dbReference type="InterPro" id="IPR001757">
    <property type="entry name" value="P_typ_ATPase"/>
</dbReference>
<dbReference type="InterPro" id="IPR044492">
    <property type="entry name" value="P_typ_ATPase_HD_dom"/>
</dbReference>
<dbReference type="NCBIfam" id="TIGR01494">
    <property type="entry name" value="ATPase_P-type"/>
    <property type="match status" value="2"/>
</dbReference>
<dbReference type="NCBIfam" id="TIGR01497">
    <property type="entry name" value="kdpB"/>
    <property type="match status" value="1"/>
</dbReference>
<dbReference type="PANTHER" id="PTHR43743">
    <property type="entry name" value="POTASSIUM-TRANSPORTING ATPASE ATP-BINDING SUBUNIT"/>
    <property type="match status" value="1"/>
</dbReference>
<dbReference type="PANTHER" id="PTHR43743:SF1">
    <property type="entry name" value="POTASSIUM-TRANSPORTING ATPASE ATP-BINDING SUBUNIT"/>
    <property type="match status" value="1"/>
</dbReference>
<dbReference type="Pfam" id="PF00122">
    <property type="entry name" value="E1-E2_ATPase"/>
    <property type="match status" value="1"/>
</dbReference>
<dbReference type="Pfam" id="PF00702">
    <property type="entry name" value="Hydrolase"/>
    <property type="match status" value="1"/>
</dbReference>
<dbReference type="PRINTS" id="PR00119">
    <property type="entry name" value="CATATPASE"/>
</dbReference>
<dbReference type="SFLD" id="SFLDG00002">
    <property type="entry name" value="C1.7:_P-type_atpase_like"/>
    <property type="match status" value="1"/>
</dbReference>
<dbReference type="SFLD" id="SFLDF00027">
    <property type="entry name" value="p-type_atpase"/>
    <property type="match status" value="1"/>
</dbReference>
<dbReference type="SUPFAM" id="SSF81653">
    <property type="entry name" value="Calcium ATPase, transduction domain A"/>
    <property type="match status" value="1"/>
</dbReference>
<dbReference type="SUPFAM" id="SSF81665">
    <property type="entry name" value="Calcium ATPase, transmembrane domain M"/>
    <property type="match status" value="1"/>
</dbReference>
<dbReference type="SUPFAM" id="SSF56784">
    <property type="entry name" value="HAD-like"/>
    <property type="match status" value="1"/>
</dbReference>
<dbReference type="PROSITE" id="PS00154">
    <property type="entry name" value="ATPASE_E1_E2"/>
    <property type="match status" value="1"/>
</dbReference>
<proteinExistence type="inferred from homology"/>
<keyword id="KW-0067">ATP-binding</keyword>
<keyword id="KW-1003">Cell membrane</keyword>
<keyword id="KW-0406">Ion transport</keyword>
<keyword id="KW-0460">Magnesium</keyword>
<keyword id="KW-0472">Membrane</keyword>
<keyword id="KW-0479">Metal-binding</keyword>
<keyword id="KW-0547">Nucleotide-binding</keyword>
<keyword id="KW-0597">Phosphoprotein</keyword>
<keyword id="KW-0630">Potassium</keyword>
<keyword id="KW-0633">Potassium transport</keyword>
<keyword id="KW-1278">Translocase</keyword>
<keyword id="KW-0812">Transmembrane</keyword>
<keyword id="KW-1133">Transmembrane helix</keyword>
<keyword id="KW-0813">Transport</keyword>
<comment type="function">
    <text evidence="1">Part of the high-affinity ATP-driven potassium transport (or Kdp) system, which catalyzes the hydrolysis of ATP coupled with the electrogenic transport of potassium into the cytoplasm. This subunit is responsible for energy coupling to the transport system and for the release of the potassium ions to the cytoplasm.</text>
</comment>
<comment type="catalytic activity">
    <reaction evidence="1">
        <text>K(+)(out) + ATP + H2O = K(+)(in) + ADP + phosphate + H(+)</text>
        <dbReference type="Rhea" id="RHEA:16777"/>
        <dbReference type="ChEBI" id="CHEBI:15377"/>
        <dbReference type="ChEBI" id="CHEBI:15378"/>
        <dbReference type="ChEBI" id="CHEBI:29103"/>
        <dbReference type="ChEBI" id="CHEBI:30616"/>
        <dbReference type="ChEBI" id="CHEBI:43474"/>
        <dbReference type="ChEBI" id="CHEBI:456216"/>
        <dbReference type="EC" id="7.2.2.6"/>
    </reaction>
    <physiologicalReaction direction="left-to-right" evidence="1">
        <dbReference type="Rhea" id="RHEA:16778"/>
    </physiologicalReaction>
</comment>
<comment type="subunit">
    <text evidence="1">The system is composed of three essential subunits: KdpA, KdpB and KdpC.</text>
</comment>
<comment type="subcellular location">
    <subcellularLocation>
        <location evidence="1">Cell membrane</location>
        <topology evidence="1">Multi-pass membrane protein</topology>
    </subcellularLocation>
</comment>
<comment type="similarity">
    <text evidence="1">Belongs to the cation transport ATPase (P-type) (TC 3.A.3) family. Type IA subfamily.</text>
</comment>